<reference key="1">
    <citation type="journal article" date="1989" name="J. Bacteriol.">
        <title>Nucleotide sequence analysis and expression of the minimum REPI replication region and incompatibility determinants of pColV-K30.</title>
        <authorList>
            <person name="Perez-Casal J.F."/>
            <person name="Gammie A.E."/>
            <person name="Crosa J.H."/>
        </authorList>
    </citation>
    <scope>NUCLEOTIDE SEQUENCE [GENOMIC DNA]</scope>
</reference>
<reference key="2">
    <citation type="journal article" date="1991" name="J. Bacteriol.">
        <authorList>
            <person name="Perez-Casal J.F."/>
            <person name="Gammie A.E."/>
            <person name="Crosa J.H."/>
        </authorList>
    </citation>
    <scope>ERRATUM OF PUBMED:2703470</scope>
</reference>
<reference key="3">
    <citation type="journal article" date="1993" name="Plasmid">
        <title>RepFIB: a basic replicon of large plasmids.</title>
        <authorList>
            <person name="Gibbs M.D."/>
            <person name="Spiers A.J."/>
            <person name="Bergquist P.L."/>
        </authorList>
    </citation>
    <scope>NUCLEOTIDE SEQUENCE [GENOMIC DNA]</scope>
</reference>
<organism>
    <name type="scientific">Escherichia coli</name>
    <dbReference type="NCBI Taxonomy" id="562"/>
    <lineage>
        <taxon>Bacteria</taxon>
        <taxon>Pseudomonadati</taxon>
        <taxon>Pseudomonadota</taxon>
        <taxon>Gammaproteobacteria</taxon>
        <taxon>Enterobacterales</taxon>
        <taxon>Enterobacteriaceae</taxon>
        <taxon>Escherichia</taxon>
    </lineage>
</organism>
<geneLocation type="plasmid">
    <name>IncFI ColV3-K30</name>
</geneLocation>
<sequence>MDKSSGELVTLTPNNNNTVQPVALMRLGVFVPTLKSLKNSKKNTLSRTDATEELTRLSLARAEGFDKVEITGPRLDMDNDFKTWVGIIHSFARHNVIGDKVELPFVEFAKLCGIPSSQSSRRLRERISPSLKRIAGTVISFSRTDEKHTREYITHLVQSAYYDTERDIVQLQADPRLFELYQFDRKVLLQLKAINALKRRESAQALYTFIESLPRDPAPISLARLRARLNLKSPVFSQNQTVRRAMEQLREIGYLDYTEIQRGRTKFFCIHYRRPRLKAPNDESKENPLQPSPAEKVSPEMAEKLALLEKLGITLDDLEKLFKSR</sequence>
<accession>P0A254</accession>
<accession>Q57481</accession>
<accession>Q99371</accession>
<protein>
    <recommendedName>
        <fullName>RepFIB replication protein A</fullName>
    </recommendedName>
</protein>
<gene>
    <name type="primary">repA</name>
    <name type="synonym">repI</name>
</gene>
<keyword id="KW-0235">DNA replication</keyword>
<keyword id="KW-0238">DNA-binding</keyword>
<keyword id="KW-0614">Plasmid</keyword>
<keyword id="KW-0615">Plasmid copy control</keyword>
<feature type="chain" id="PRO_0000068307" description="RepFIB replication protein A">
    <location>
        <begin position="1"/>
        <end position="325"/>
    </location>
</feature>
<feature type="region of interest" description="Disordered" evidence="2">
    <location>
        <begin position="279"/>
        <end position="298"/>
    </location>
</feature>
<proteinExistence type="inferred from homology"/>
<name>REP12_ECOLX</name>
<comment type="function">
    <text evidence="1">This protein is essential for plasmid replication; it is involved in copy control functions. In vitro, binds to the DNA repeat units, BCDD'D'', EFG and HIJ (By similarity).</text>
</comment>
<comment type="similarity">
    <text evidence="3">Belongs to the initiator RepB protein family.</text>
</comment>
<comment type="caution">
    <text evidence="3">It is uncertain whether Met-1 or Met-25 is the initiator.</text>
</comment>
<comment type="sequence caution" evidence="3">
    <conflict type="erroneous initiation">
        <sequence resource="EMBL-CDS" id="AAA23197"/>
    </conflict>
</comment>
<evidence type="ECO:0000250" key="1"/>
<evidence type="ECO:0000256" key="2">
    <source>
        <dbReference type="SAM" id="MobiDB-lite"/>
    </source>
</evidence>
<evidence type="ECO:0000305" key="3"/>
<dbReference type="EMBL" id="M24908">
    <property type="protein sequence ID" value="AAA23197.1"/>
    <property type="status" value="ALT_INIT"/>
    <property type="molecule type" value="Genomic_DNA"/>
</dbReference>
<dbReference type="EMBL" id="L01251">
    <property type="protein sequence ID" value="AAA71881.1"/>
    <property type="molecule type" value="Unassigned_DNA"/>
</dbReference>
<dbReference type="PIR" id="I40787">
    <property type="entry name" value="I40787"/>
</dbReference>
<dbReference type="RefSeq" id="NP_863021.1">
    <property type="nucleotide sequence ID" value="NC_004998.1"/>
</dbReference>
<dbReference type="RefSeq" id="WP_000361611.1">
    <property type="nucleotide sequence ID" value="NZ_WXYY01000004.1"/>
</dbReference>
<dbReference type="RefSeq" id="YP_001816634.1">
    <property type="nucleotide sequence ID" value="NC_010558.1"/>
</dbReference>
<dbReference type="RefSeq" id="YP_002527466.1">
    <property type="nucleotide sequence ID" value="NC_011964.1"/>
</dbReference>
<dbReference type="RefSeq" id="YP_009068209.1">
    <property type="nucleotide sequence ID" value="NC_025139.1"/>
</dbReference>
<dbReference type="RefSeq" id="YP_009070678.1">
    <property type="nucleotide sequence ID" value="NC_025175.1"/>
</dbReference>
<dbReference type="RefSeq" id="YP_009071151.1">
    <property type="nucleotide sequence ID" value="NC_025179.1"/>
</dbReference>
<dbReference type="RefSeq" id="YP_444069.1">
    <property type="nucleotide sequence ID" value="NC_007675.1"/>
</dbReference>
<dbReference type="OMA" id="CGIPSNQ"/>
<dbReference type="GO" id="GO:0003677">
    <property type="term" value="F:DNA binding"/>
    <property type="evidence" value="ECO:0007669"/>
    <property type="project" value="UniProtKB-KW"/>
</dbReference>
<dbReference type="GO" id="GO:0003887">
    <property type="term" value="F:DNA-directed DNA polymerase activity"/>
    <property type="evidence" value="ECO:0007669"/>
    <property type="project" value="InterPro"/>
</dbReference>
<dbReference type="GO" id="GO:0006270">
    <property type="term" value="P:DNA replication initiation"/>
    <property type="evidence" value="ECO:0007669"/>
    <property type="project" value="InterPro"/>
</dbReference>
<dbReference type="GO" id="GO:0006276">
    <property type="term" value="P:plasmid maintenance"/>
    <property type="evidence" value="ECO:0007669"/>
    <property type="project" value="UniProtKB-KW"/>
</dbReference>
<dbReference type="Gene3D" id="1.10.10.10">
    <property type="entry name" value="Winged helix-like DNA-binding domain superfamily/Winged helix DNA-binding domain"/>
    <property type="match status" value="1"/>
</dbReference>
<dbReference type="InterPro" id="IPR000525">
    <property type="entry name" value="Initiator_Rep_WH1"/>
</dbReference>
<dbReference type="InterPro" id="IPR036388">
    <property type="entry name" value="WH-like_DNA-bd_sf"/>
</dbReference>
<dbReference type="Pfam" id="PF01051">
    <property type="entry name" value="Rep3_N"/>
    <property type="match status" value="1"/>
</dbReference>